<name>GUF1_LACBS</name>
<keyword id="KW-0342">GTP-binding</keyword>
<keyword id="KW-0378">Hydrolase</keyword>
<keyword id="KW-0472">Membrane</keyword>
<keyword id="KW-0496">Mitochondrion</keyword>
<keyword id="KW-0999">Mitochondrion inner membrane</keyword>
<keyword id="KW-0547">Nucleotide-binding</keyword>
<keyword id="KW-0648">Protein biosynthesis</keyword>
<keyword id="KW-1185">Reference proteome</keyword>
<feature type="chain" id="PRO_0000402887" description="Translation factor GUF1, mitochondrial">
    <location>
        <begin position="1"/>
        <end position="628"/>
    </location>
</feature>
<feature type="domain" description="tr-type G">
    <location>
        <begin position="27"/>
        <end position="209"/>
    </location>
</feature>
<feature type="binding site" evidence="1">
    <location>
        <begin position="36"/>
        <end position="43"/>
    </location>
    <ligand>
        <name>GTP</name>
        <dbReference type="ChEBI" id="CHEBI:37565"/>
    </ligand>
</feature>
<feature type="binding site" evidence="1">
    <location>
        <begin position="102"/>
        <end position="106"/>
    </location>
    <ligand>
        <name>GTP</name>
        <dbReference type="ChEBI" id="CHEBI:37565"/>
    </ligand>
</feature>
<feature type="binding site" evidence="1">
    <location>
        <begin position="156"/>
        <end position="159"/>
    </location>
    <ligand>
        <name>GTP</name>
        <dbReference type="ChEBI" id="CHEBI:37565"/>
    </ligand>
</feature>
<reference key="1">
    <citation type="journal article" date="2008" name="Nature">
        <title>The genome of Laccaria bicolor provides insights into mycorrhizal symbiosis.</title>
        <authorList>
            <person name="Martin F."/>
            <person name="Aerts A."/>
            <person name="Ahren D."/>
            <person name="Brun A."/>
            <person name="Danchin E.G.J."/>
            <person name="Duchaussoy F."/>
            <person name="Gibon J."/>
            <person name="Kohler A."/>
            <person name="Lindquist E."/>
            <person name="Pereda V."/>
            <person name="Salamov A."/>
            <person name="Shapiro H.J."/>
            <person name="Wuyts J."/>
            <person name="Blaudez D."/>
            <person name="Buee M."/>
            <person name="Brokstein P."/>
            <person name="Canbaeck B."/>
            <person name="Cohen D."/>
            <person name="Courty P.E."/>
            <person name="Coutinho P.M."/>
            <person name="Delaruelle C."/>
            <person name="Detter J.C."/>
            <person name="Deveau A."/>
            <person name="DiFazio S."/>
            <person name="Duplessis S."/>
            <person name="Fraissinet-Tachet L."/>
            <person name="Lucic E."/>
            <person name="Frey-Klett P."/>
            <person name="Fourrey C."/>
            <person name="Feussner I."/>
            <person name="Gay G."/>
            <person name="Grimwood J."/>
            <person name="Hoegger P.J."/>
            <person name="Jain P."/>
            <person name="Kilaru S."/>
            <person name="Labbe J."/>
            <person name="Lin Y.C."/>
            <person name="Legue V."/>
            <person name="Le Tacon F."/>
            <person name="Marmeisse R."/>
            <person name="Melayah D."/>
            <person name="Montanini B."/>
            <person name="Muratet M."/>
            <person name="Nehls U."/>
            <person name="Niculita-Hirzel H."/>
            <person name="Oudot-Le Secq M.P."/>
            <person name="Peter M."/>
            <person name="Quesneville H."/>
            <person name="Rajashekar B."/>
            <person name="Reich M."/>
            <person name="Rouhier N."/>
            <person name="Schmutz J."/>
            <person name="Yin T."/>
            <person name="Chalot M."/>
            <person name="Henrissat B."/>
            <person name="Kuees U."/>
            <person name="Lucas S."/>
            <person name="Van de Peer Y."/>
            <person name="Podila G.K."/>
            <person name="Polle A."/>
            <person name="Pukkila P.J."/>
            <person name="Richardson P.M."/>
            <person name="Rouze P."/>
            <person name="Sanders I.R."/>
            <person name="Stajich J.E."/>
            <person name="Tunlid A."/>
            <person name="Tuskan G."/>
            <person name="Grigoriev I.V."/>
        </authorList>
    </citation>
    <scope>NUCLEOTIDE SEQUENCE [LARGE SCALE GENOMIC DNA]</scope>
    <source>
        <strain>S238N-H82 / ATCC MYA-4686</strain>
    </source>
</reference>
<dbReference type="EC" id="3.6.5.-"/>
<dbReference type="EMBL" id="DS547092">
    <property type="protein sequence ID" value="EDR14777.1"/>
    <property type="molecule type" value="Genomic_DNA"/>
</dbReference>
<dbReference type="RefSeq" id="XP_001875336.1">
    <property type="nucleotide sequence ID" value="XM_001875301.1"/>
</dbReference>
<dbReference type="SMR" id="B0CS18"/>
<dbReference type="FunCoup" id="B0CS18">
    <property type="interactions" value="339"/>
</dbReference>
<dbReference type="STRING" id="486041.B0CS18"/>
<dbReference type="GeneID" id="6070610"/>
<dbReference type="KEGG" id="lbc:LACBIDRAFT_243891"/>
<dbReference type="HOGENOM" id="CLU_009995_3_3_1"/>
<dbReference type="InParanoid" id="B0CS18"/>
<dbReference type="OrthoDB" id="1074at2759"/>
<dbReference type="Proteomes" id="UP000001194">
    <property type="component" value="Unassembled WGS sequence"/>
</dbReference>
<dbReference type="GO" id="GO:0005743">
    <property type="term" value="C:mitochondrial inner membrane"/>
    <property type="evidence" value="ECO:0007669"/>
    <property type="project" value="UniProtKB-SubCell"/>
</dbReference>
<dbReference type="GO" id="GO:0005759">
    <property type="term" value="C:mitochondrial matrix"/>
    <property type="evidence" value="ECO:0007669"/>
    <property type="project" value="UniProtKB-UniRule"/>
</dbReference>
<dbReference type="GO" id="GO:0005525">
    <property type="term" value="F:GTP binding"/>
    <property type="evidence" value="ECO:0007669"/>
    <property type="project" value="UniProtKB-UniRule"/>
</dbReference>
<dbReference type="GO" id="GO:0003924">
    <property type="term" value="F:GTPase activity"/>
    <property type="evidence" value="ECO:0007669"/>
    <property type="project" value="UniProtKB-UniRule"/>
</dbReference>
<dbReference type="GO" id="GO:0097177">
    <property type="term" value="F:mitochondrial ribosome binding"/>
    <property type="evidence" value="ECO:0007669"/>
    <property type="project" value="TreeGrafter"/>
</dbReference>
<dbReference type="GO" id="GO:0045727">
    <property type="term" value="P:positive regulation of translation"/>
    <property type="evidence" value="ECO:0007669"/>
    <property type="project" value="UniProtKB-UniRule"/>
</dbReference>
<dbReference type="GO" id="GO:0006412">
    <property type="term" value="P:translation"/>
    <property type="evidence" value="ECO:0007669"/>
    <property type="project" value="UniProtKB-KW"/>
</dbReference>
<dbReference type="CDD" id="cd03699">
    <property type="entry name" value="EF4_II"/>
    <property type="match status" value="1"/>
</dbReference>
<dbReference type="CDD" id="cd16260">
    <property type="entry name" value="EF4_III"/>
    <property type="match status" value="1"/>
</dbReference>
<dbReference type="CDD" id="cd01890">
    <property type="entry name" value="LepA"/>
    <property type="match status" value="1"/>
</dbReference>
<dbReference type="CDD" id="cd03709">
    <property type="entry name" value="lepA_C"/>
    <property type="match status" value="1"/>
</dbReference>
<dbReference type="FunFam" id="3.40.50.300:FF:000078">
    <property type="entry name" value="Elongation factor 4"/>
    <property type="match status" value="1"/>
</dbReference>
<dbReference type="FunFam" id="2.40.30.10:FF:000015">
    <property type="entry name" value="Translation factor GUF1, mitochondrial"/>
    <property type="match status" value="1"/>
</dbReference>
<dbReference type="FunFam" id="3.30.70.240:FF:000007">
    <property type="entry name" value="Translation factor GUF1, mitochondrial"/>
    <property type="match status" value="1"/>
</dbReference>
<dbReference type="FunFam" id="3.30.70.2570:FF:000001">
    <property type="entry name" value="Translation factor GUF1, mitochondrial"/>
    <property type="match status" value="1"/>
</dbReference>
<dbReference type="FunFam" id="3.30.70.870:FF:000004">
    <property type="entry name" value="Translation factor GUF1, mitochondrial"/>
    <property type="match status" value="1"/>
</dbReference>
<dbReference type="Gene3D" id="3.30.70.240">
    <property type="match status" value="1"/>
</dbReference>
<dbReference type="Gene3D" id="3.30.70.2570">
    <property type="entry name" value="Elongation factor 4, C-terminal domain"/>
    <property type="match status" value="1"/>
</dbReference>
<dbReference type="Gene3D" id="3.30.70.870">
    <property type="entry name" value="Elongation Factor G (Translational Gtpase), domain 3"/>
    <property type="match status" value="1"/>
</dbReference>
<dbReference type="Gene3D" id="3.40.50.300">
    <property type="entry name" value="P-loop containing nucleotide triphosphate hydrolases"/>
    <property type="match status" value="1"/>
</dbReference>
<dbReference type="Gene3D" id="2.40.30.10">
    <property type="entry name" value="Translation factors"/>
    <property type="match status" value="1"/>
</dbReference>
<dbReference type="HAMAP" id="MF_00071">
    <property type="entry name" value="LepA"/>
    <property type="match status" value="1"/>
</dbReference>
<dbReference type="InterPro" id="IPR006297">
    <property type="entry name" value="EF-4"/>
</dbReference>
<dbReference type="InterPro" id="IPR035647">
    <property type="entry name" value="EFG_III/V"/>
</dbReference>
<dbReference type="InterPro" id="IPR000640">
    <property type="entry name" value="EFG_V-like"/>
</dbReference>
<dbReference type="InterPro" id="IPR004161">
    <property type="entry name" value="EFTu-like_2"/>
</dbReference>
<dbReference type="InterPro" id="IPR038363">
    <property type="entry name" value="LepA_C_sf"/>
</dbReference>
<dbReference type="InterPro" id="IPR013842">
    <property type="entry name" value="LepA_CTD"/>
</dbReference>
<dbReference type="InterPro" id="IPR035654">
    <property type="entry name" value="LepA_IV"/>
</dbReference>
<dbReference type="InterPro" id="IPR027417">
    <property type="entry name" value="P-loop_NTPase"/>
</dbReference>
<dbReference type="InterPro" id="IPR005225">
    <property type="entry name" value="Small_GTP-bd"/>
</dbReference>
<dbReference type="InterPro" id="IPR000795">
    <property type="entry name" value="T_Tr_GTP-bd_dom"/>
</dbReference>
<dbReference type="InterPro" id="IPR009000">
    <property type="entry name" value="Transl_B-barrel_sf"/>
</dbReference>
<dbReference type="NCBIfam" id="TIGR01393">
    <property type="entry name" value="lepA"/>
    <property type="match status" value="1"/>
</dbReference>
<dbReference type="NCBIfam" id="TIGR00231">
    <property type="entry name" value="small_GTP"/>
    <property type="match status" value="1"/>
</dbReference>
<dbReference type="PANTHER" id="PTHR43512:SF7">
    <property type="entry name" value="TRANSLATION FACTOR GUF1, MITOCHONDRIAL"/>
    <property type="match status" value="1"/>
</dbReference>
<dbReference type="PANTHER" id="PTHR43512">
    <property type="entry name" value="TRANSLATION FACTOR GUF1-RELATED"/>
    <property type="match status" value="1"/>
</dbReference>
<dbReference type="Pfam" id="PF00679">
    <property type="entry name" value="EFG_C"/>
    <property type="match status" value="1"/>
</dbReference>
<dbReference type="Pfam" id="PF00009">
    <property type="entry name" value="GTP_EFTU"/>
    <property type="match status" value="1"/>
</dbReference>
<dbReference type="Pfam" id="PF03144">
    <property type="entry name" value="GTP_EFTU_D2"/>
    <property type="match status" value="1"/>
</dbReference>
<dbReference type="Pfam" id="PF06421">
    <property type="entry name" value="LepA_C"/>
    <property type="match status" value="1"/>
</dbReference>
<dbReference type="PRINTS" id="PR00315">
    <property type="entry name" value="ELONGATNFCT"/>
</dbReference>
<dbReference type="SUPFAM" id="SSF54980">
    <property type="entry name" value="EF-G C-terminal domain-like"/>
    <property type="match status" value="2"/>
</dbReference>
<dbReference type="SUPFAM" id="SSF52540">
    <property type="entry name" value="P-loop containing nucleoside triphosphate hydrolases"/>
    <property type="match status" value="1"/>
</dbReference>
<dbReference type="SUPFAM" id="SSF50447">
    <property type="entry name" value="Translation proteins"/>
    <property type="match status" value="1"/>
</dbReference>
<dbReference type="PROSITE" id="PS51722">
    <property type="entry name" value="G_TR_2"/>
    <property type="match status" value="1"/>
</dbReference>
<proteinExistence type="inferred from homology"/>
<protein>
    <recommendedName>
        <fullName evidence="1">Translation factor GUF1, mitochondrial</fullName>
        <ecNumber>3.6.5.-</ecNumber>
    </recommendedName>
    <alternativeName>
        <fullName evidence="1">Elongation factor 4 homolog</fullName>
        <shortName evidence="1">EF-4</shortName>
    </alternativeName>
    <alternativeName>
        <fullName evidence="1">GTPase GUF1</fullName>
    </alternativeName>
    <alternativeName>
        <fullName evidence="1">Ribosomal back-translocase</fullName>
    </alternativeName>
</protein>
<comment type="function">
    <text evidence="1">Promotes mitochondrial protein synthesis. May act as a fidelity factor of the translation reaction, by catalyzing a one-codon backward translocation of tRNAs on improperly translocated ribosomes. Binds to mitochondrial ribosomes in a GTP-dependent manner.</text>
</comment>
<comment type="catalytic activity">
    <reaction evidence="1">
        <text>GTP + H2O = GDP + phosphate + H(+)</text>
        <dbReference type="Rhea" id="RHEA:19669"/>
        <dbReference type="ChEBI" id="CHEBI:15377"/>
        <dbReference type="ChEBI" id="CHEBI:15378"/>
        <dbReference type="ChEBI" id="CHEBI:37565"/>
        <dbReference type="ChEBI" id="CHEBI:43474"/>
        <dbReference type="ChEBI" id="CHEBI:58189"/>
    </reaction>
</comment>
<comment type="subcellular location">
    <subcellularLocation>
        <location evidence="1">Mitochondrion inner membrane</location>
        <topology evidence="1">Peripheral membrane protein</topology>
        <orientation evidence="1">Matrix side</orientation>
    </subcellularLocation>
</comment>
<comment type="miscellaneous">
    <text evidence="1">This protein may be expected to contain an N-terminal transit peptide but none has been predicted.</text>
</comment>
<comment type="similarity">
    <text evidence="2">Belongs to the TRAFAC class translation factor GTPase superfamily. Classic translation factor GTPase family. LepA subfamily.</text>
</comment>
<gene>
    <name evidence="1" type="primary">GUF1</name>
    <name type="ORF">LACBIDRAFT_243891</name>
</gene>
<evidence type="ECO:0000255" key="1">
    <source>
        <dbReference type="HAMAP-Rule" id="MF_03137"/>
    </source>
</evidence>
<evidence type="ECO:0000305" key="2"/>
<accession>B0CS18</accession>
<sequence>MEEFPCDVIRYEAYVYGVCEFRLPFFLPSRNFSIIAHIDHGKSTLADRLLELTGTIQKKQAGKNEQVLDKLKVERERGITGKSNHSMIDKFKGKDYLLNLIDTPGHVDFAWEVSRSLAACQGALLLVDASQGVQAQSISVFHNAKERGLKIIPILNKIDLPAAQPERIAAQMQATFGIDPSDILHISAKTGQGTQEVLEAIISRIPPPSGRIHAPLKAFLFDSFYDRYRGVISLINVQEGVLRKGDKISSCHTRKKYEITELGILHPEEVPTQSLNPGQVGYIACNMKQSSEAHIGDTLHRAGEPVEPMEGFQETKAMVFAGVFPVDNSDFPKLEESINRLTLTDRSVTIQRESSSALGQGCRLGFLGTLHMDVFRQRLEDEYDANIIITAPTVPYKVVYHDREVIISNPTEFPEVTDATARVKEIQEPVVKASIIVPEEYFGDLMELCYSHRAEDLDHRYLDSGAVSSRIMLNCILPLSEIVTDFFDQLKSRSSGFASFDYEDAGYRKSDLAKMSFLLNGKPVDALALIIHRSAQEAVGRQWVKKLHKVIPRQLYEVPIQAAIGKKVIARETLKAMRADVTAGLYGGHYERKMKHLENQKEGKRKMKKMGTIDLPQEAFFDILSNKS</sequence>
<organism>
    <name type="scientific">Laccaria bicolor (strain S238N-H82 / ATCC MYA-4686)</name>
    <name type="common">Bicoloured deceiver</name>
    <name type="synonym">Laccaria laccata var. bicolor</name>
    <dbReference type="NCBI Taxonomy" id="486041"/>
    <lineage>
        <taxon>Eukaryota</taxon>
        <taxon>Fungi</taxon>
        <taxon>Dikarya</taxon>
        <taxon>Basidiomycota</taxon>
        <taxon>Agaricomycotina</taxon>
        <taxon>Agaricomycetes</taxon>
        <taxon>Agaricomycetidae</taxon>
        <taxon>Agaricales</taxon>
        <taxon>Agaricineae</taxon>
        <taxon>Hydnangiaceae</taxon>
        <taxon>Laccaria</taxon>
    </lineage>
</organism>